<keyword id="KW-1185">Reference proteome</keyword>
<accession>P24760</accession>
<accession>Q76ZP4</accession>
<organismHost>
    <name type="scientific">Bos taurus</name>
    <name type="common">Bovine</name>
    <dbReference type="NCBI Taxonomy" id="9913"/>
</organismHost>
<protein>
    <recommendedName>
        <fullName>Protein OPG159</fullName>
    </recommendedName>
</protein>
<dbReference type="EMBL" id="M61187">
    <property type="protein sequence ID" value="AAA48328.1"/>
    <property type="molecule type" value="Genomic_DNA"/>
</dbReference>
<dbReference type="EMBL" id="D11079">
    <property type="protein sequence ID" value="BAA01803.1"/>
    <property type="status" value="ALT_INIT"/>
    <property type="molecule type" value="Genomic_DNA"/>
</dbReference>
<dbReference type="EMBL" id="X57318">
    <property type="protein sequence ID" value="CAA40581.1"/>
    <property type="molecule type" value="Genomic_DNA"/>
</dbReference>
<dbReference type="EMBL" id="AY243312">
    <property type="protein sequence ID" value="AAO89433.1"/>
    <property type="molecule type" value="Genomic_DNA"/>
</dbReference>
<dbReference type="PIR" id="JQ1767">
    <property type="entry name" value="JQ1767"/>
</dbReference>
<dbReference type="RefSeq" id="YP_233036.1">
    <property type="nucleotide sequence ID" value="NC_006998.1"/>
</dbReference>
<dbReference type="DNASU" id="3707684"/>
<dbReference type="GeneID" id="3707684"/>
<dbReference type="KEGG" id="vg:3707684"/>
<dbReference type="Proteomes" id="UP000000344">
    <property type="component" value="Genome"/>
</dbReference>
<dbReference type="InterPro" id="IPR008786">
    <property type="entry name" value="Poxvirus_A31"/>
</dbReference>
<dbReference type="Pfam" id="PF05771">
    <property type="entry name" value="Pox_A31"/>
    <property type="match status" value="1"/>
</dbReference>
<name>PG159_VACCW</name>
<reference key="1">
    <citation type="journal article" date="1991" name="J. Biol. Chem.">
        <title>Identification, sequence, and expression of the gene encoding a Mr 35,000 subunit of the vaccinia virus DNA-dependent RNA polymerase.</title>
        <authorList>
            <person name="Amegadzie B.Y."/>
            <person name="Ahn B.-Y."/>
            <person name="Moss B."/>
        </authorList>
    </citation>
    <scope>NUCLEOTIDE SEQUENCE [GENOMIC DNA]</scope>
</reference>
<reference key="2">
    <citation type="journal article" date="1991" name="J. Gen. Virol.">
        <title>Nucleotide sequence of 42 kbp of vaccinia virus strain WR from near the right inverted terminal repeat.</title>
        <authorList>
            <person name="Smith G.L."/>
            <person name="Chan Y.S."/>
            <person name="Howard S.T."/>
        </authorList>
    </citation>
    <scope>NUCLEOTIDE SEQUENCE [GENOMIC DNA]</scope>
</reference>
<reference key="3">
    <citation type="submission" date="2003-02" db="EMBL/GenBank/DDBJ databases">
        <title>Sequencing of the coding region of Vaccinia-WR to an average 9-fold redundancy and an error rate of 0.16/10kb.</title>
        <authorList>
            <person name="Esposito J.J."/>
            <person name="Frace A.M."/>
            <person name="Sammons S.A."/>
            <person name="Olsen-Rasmussen M."/>
            <person name="Osborne J."/>
            <person name="Wohlhueter R."/>
        </authorList>
    </citation>
    <scope>NUCLEOTIDE SEQUENCE [LARGE SCALE GENOMIC DNA]</scope>
</reference>
<evidence type="ECO:0000305" key="1"/>
<sequence>MASILNTLRFLEKTSFYNCNDSITKEKIKIKHKGMSFVFYKPKHSTVVKYLSGGGIYHDDLVVLGKVTINNLKMMLFYMDLSYHGVTSSGAIYKLGSSIDRLSLNRTIVTKVNNYDDTFFDDDD</sequence>
<feature type="chain" id="PRO_0000099310" description="Protein OPG159">
    <location>
        <begin position="1"/>
        <end position="124"/>
    </location>
</feature>
<proteinExistence type="inferred from homology"/>
<comment type="similarity">
    <text evidence="1">Belongs to the orthopoxvirus OPG159 protein family.</text>
</comment>
<comment type="sequence caution" evidence="1">
    <conflict type="erroneous initiation">
        <sequence resource="EMBL-CDS" id="BAA01803"/>
    </conflict>
</comment>
<organism>
    <name type="scientific">Vaccinia virus (strain Western Reserve)</name>
    <name type="common">VACV</name>
    <name type="synonym">Vaccinia virus (strain WR)</name>
    <dbReference type="NCBI Taxonomy" id="10254"/>
    <lineage>
        <taxon>Viruses</taxon>
        <taxon>Varidnaviria</taxon>
        <taxon>Bamfordvirae</taxon>
        <taxon>Nucleocytoviricota</taxon>
        <taxon>Pokkesviricetes</taxon>
        <taxon>Chitovirales</taxon>
        <taxon>Poxviridae</taxon>
        <taxon>Chordopoxvirinae</taxon>
        <taxon>Orthopoxvirus</taxon>
        <taxon>Vaccinia virus</taxon>
    </lineage>
</organism>
<gene>
    <name type="primary">OPG159</name>
    <name type="ordered locus">VACWR154</name>
    <name type="ORF">A31R</name>
</gene>